<organism>
    <name type="scientific">Haloferax volcanii (strain ATCC 29605 / DSM 3757 / JCM 8879 / NBRC 14742 / NCIMB 2012 / VKM B-1768 / DS2)</name>
    <name type="common">Halobacterium volcanii</name>
    <dbReference type="NCBI Taxonomy" id="309800"/>
    <lineage>
        <taxon>Archaea</taxon>
        <taxon>Methanobacteriati</taxon>
        <taxon>Methanobacteriota</taxon>
        <taxon>Stenosarchaea group</taxon>
        <taxon>Halobacteria</taxon>
        <taxon>Halobacteriales</taxon>
        <taxon>Haloferacaceae</taxon>
        <taxon>Haloferax</taxon>
    </lineage>
</organism>
<reference key="1">
    <citation type="journal article" date="1999" name="Mol. Microbiol.">
        <title>Expression and heat-responsive regulation of a TFIIB homologue from the archaeon Haloferax volcanii.</title>
        <authorList>
            <person name="Thompson D.K."/>
            <person name="Palmer J.R."/>
            <person name="Daniels C.J."/>
        </authorList>
    </citation>
    <scope>NUCLEOTIDE SEQUENCE [GENOMIC DNA]</scope>
    <scope>INDUCTION</scope>
    <source>
        <strain>ATCC 29605 / DSM 3757 / JCM 8879 / NBRC 14742 / NCIMB 2012 / VKM B-1768 / DS2</strain>
    </source>
</reference>
<reference key="2">
    <citation type="journal article" date="2010" name="PLoS ONE">
        <title>The complete genome sequence of Haloferax volcanii DS2, a model archaeon.</title>
        <authorList>
            <person name="Hartman A.L."/>
            <person name="Norais C."/>
            <person name="Badger J.H."/>
            <person name="Delmas S."/>
            <person name="Haldenby S."/>
            <person name="Madupu R."/>
            <person name="Robinson J."/>
            <person name="Khouri H."/>
            <person name="Ren Q."/>
            <person name="Lowe T.M."/>
            <person name="Maupin-Furlow J."/>
            <person name="Pohlschroder M."/>
            <person name="Daniels C."/>
            <person name="Pfeiffer F."/>
            <person name="Allers T."/>
            <person name="Eisen J.A."/>
        </authorList>
    </citation>
    <scope>NUCLEOTIDE SEQUENCE [LARGE SCALE GENOMIC DNA]</scope>
    <source>
        <strain>ATCC 29605 / DSM 3757 / JCM 8879 / NBRC 14742 / NCIMB 2012 / VKM B-1768 / DS2</strain>
    </source>
</reference>
<protein>
    <recommendedName>
        <fullName evidence="1">Transcription initiation factor IIB 2</fullName>
        <shortName evidence="1">TFIIB 2</shortName>
    </recommendedName>
</protein>
<keyword id="KW-0479">Metal-binding</keyword>
<keyword id="KW-1185">Reference proteome</keyword>
<keyword id="KW-0677">Repeat</keyword>
<keyword id="KW-0804">Transcription</keyword>
<keyword id="KW-0805">Transcription regulation</keyword>
<keyword id="KW-0862">Zinc</keyword>
<keyword id="KW-0863">Zinc-finger</keyword>
<evidence type="ECO:0000255" key="1">
    <source>
        <dbReference type="HAMAP-Rule" id="MF_00383"/>
    </source>
</evidence>
<evidence type="ECO:0000255" key="2">
    <source>
        <dbReference type="PROSITE-ProRule" id="PRU00469"/>
    </source>
</evidence>
<evidence type="ECO:0000256" key="3">
    <source>
        <dbReference type="SAM" id="MobiDB-lite"/>
    </source>
</evidence>
<evidence type="ECO:0000269" key="4">
    <source>
    </source>
</evidence>
<sequence length="332" mass="37282">MSDTITTRTYSADAKSRDVRPRESERDETQQDETQVCPECSGHLVTDEEHGETICEDCGLVVEDTVVDRGPEWRAFDSAERDSKSRVGAPTTKMMHDKGLSTNIGWQNKDAYGKSLSPRQREQMQRLRTWNERFRTRDSKERNLKQALGEIDRMASALGLPENVRETASVIYRRALNDDLLPGRSIEGVATSALYASARMAGTPRSLDELEKVSRVDKMELTRTYRYIVRELKLEIKPADPEQYVPRFASELGLSDEAERQARQLLRDAKETGIHSGKSPVGLAAAAVYAAALLTNEKVTQSEVSTVADISEVTIRNRYKELLEVQDGTLLA</sequence>
<name>TF2B2_HALVD</name>
<comment type="function">
    <text evidence="1">Stabilizes TBP binding to an archaeal box-A promoter. Also responsible for recruiting RNA polymerase II to the pre-initiation complex (DNA-TBP-TFIIB).</text>
</comment>
<comment type="induction">
    <text evidence="4">By heat shock (60 degrees Celsius), with a 2-fold increase (at protein level).</text>
</comment>
<comment type="miscellaneous">
    <text>There are 6-12 TFIIB paralogs in this organism.</text>
</comment>
<comment type="similarity">
    <text evidence="1">Belongs to the TFIIB family.</text>
</comment>
<gene>
    <name evidence="1" type="primary">tfb2</name>
    <name type="synonym">tfb9</name>
    <name type="ordered locus">HVO_1676</name>
</gene>
<proteinExistence type="evidence at protein level"/>
<feature type="chain" id="PRO_0000119319" description="Transcription initiation factor IIB 2">
    <location>
        <begin position="1"/>
        <end position="332"/>
    </location>
</feature>
<feature type="repeat" description="1">
    <location>
        <begin position="149"/>
        <end position="232"/>
    </location>
</feature>
<feature type="repeat" description="2">
    <location>
        <begin position="243"/>
        <end position="324"/>
    </location>
</feature>
<feature type="zinc finger region" description="TFIIB-type" evidence="2">
    <location>
        <begin position="33"/>
        <end position="63"/>
    </location>
</feature>
<feature type="region of interest" description="Disordered" evidence="3">
    <location>
        <begin position="1"/>
        <end position="36"/>
    </location>
</feature>
<feature type="region of interest" description="Disordered" evidence="3">
    <location>
        <begin position="77"/>
        <end position="106"/>
    </location>
</feature>
<feature type="compositionally biased region" description="Polar residues" evidence="3">
    <location>
        <begin position="1"/>
        <end position="10"/>
    </location>
</feature>
<feature type="compositionally biased region" description="Basic and acidic residues" evidence="3">
    <location>
        <begin position="14"/>
        <end position="29"/>
    </location>
</feature>
<feature type="binding site" evidence="2">
    <location>
        <position position="37"/>
    </location>
    <ligand>
        <name>Zn(2+)</name>
        <dbReference type="ChEBI" id="CHEBI:29105"/>
    </ligand>
</feature>
<feature type="binding site" evidence="2">
    <location>
        <position position="40"/>
    </location>
    <ligand>
        <name>Zn(2+)</name>
        <dbReference type="ChEBI" id="CHEBI:29105"/>
    </ligand>
</feature>
<feature type="binding site" evidence="2">
    <location>
        <position position="55"/>
    </location>
    <ligand>
        <name>Zn(2+)</name>
        <dbReference type="ChEBI" id="CHEBI:29105"/>
    </ligand>
</feature>
<feature type="binding site" evidence="2">
    <location>
        <position position="58"/>
    </location>
    <ligand>
        <name>Zn(2+)</name>
        <dbReference type="ChEBI" id="CHEBI:29105"/>
    </ligand>
</feature>
<accession>Q9YGA5</accession>
<accession>D4GZP0</accession>
<dbReference type="EMBL" id="AF143693">
    <property type="protein sequence ID" value="AAD43074.1"/>
    <property type="molecule type" value="Genomic_DNA"/>
</dbReference>
<dbReference type="EMBL" id="CP001956">
    <property type="protein sequence ID" value="ADE05068.1"/>
    <property type="molecule type" value="Genomic_DNA"/>
</dbReference>
<dbReference type="PIR" id="T44261">
    <property type="entry name" value="T44261"/>
</dbReference>
<dbReference type="RefSeq" id="WP_004041566.1">
    <property type="nucleotide sequence ID" value="NC_013967.1"/>
</dbReference>
<dbReference type="SMR" id="Q9YGA5"/>
<dbReference type="STRING" id="309800.HVO_1676"/>
<dbReference type="PaxDb" id="309800-C498_03735"/>
<dbReference type="EnsemblBacteria" id="ADE05068">
    <property type="protein sequence ID" value="ADE05068"/>
    <property type="gene ID" value="HVO_1676"/>
</dbReference>
<dbReference type="GeneID" id="8924391"/>
<dbReference type="KEGG" id="hvo:HVO_1676"/>
<dbReference type="eggNOG" id="arCOG01981">
    <property type="taxonomic scope" value="Archaea"/>
</dbReference>
<dbReference type="HOGENOM" id="CLU_043736_0_0_2"/>
<dbReference type="OrthoDB" id="7429at2157"/>
<dbReference type="Proteomes" id="UP000008243">
    <property type="component" value="Chromosome"/>
</dbReference>
<dbReference type="GO" id="GO:0097550">
    <property type="term" value="C:transcription preinitiation complex"/>
    <property type="evidence" value="ECO:0007669"/>
    <property type="project" value="TreeGrafter"/>
</dbReference>
<dbReference type="GO" id="GO:0003700">
    <property type="term" value="F:DNA-binding transcription factor activity"/>
    <property type="evidence" value="ECO:0007669"/>
    <property type="project" value="UniProtKB-UniRule"/>
</dbReference>
<dbReference type="GO" id="GO:0017025">
    <property type="term" value="F:TBP-class protein binding"/>
    <property type="evidence" value="ECO:0007669"/>
    <property type="project" value="InterPro"/>
</dbReference>
<dbReference type="GO" id="GO:0008270">
    <property type="term" value="F:zinc ion binding"/>
    <property type="evidence" value="ECO:0007669"/>
    <property type="project" value="UniProtKB-UniRule"/>
</dbReference>
<dbReference type="GO" id="GO:0070897">
    <property type="term" value="P:transcription preinitiation complex assembly"/>
    <property type="evidence" value="ECO:0007669"/>
    <property type="project" value="InterPro"/>
</dbReference>
<dbReference type="CDD" id="cd20549">
    <property type="entry name" value="CYCLIN_TFIIB_archaea_like_rpt1"/>
    <property type="match status" value="1"/>
</dbReference>
<dbReference type="CDD" id="cd20550">
    <property type="entry name" value="CYCLIN_TFIIB_archaea_like_rpt2"/>
    <property type="match status" value="1"/>
</dbReference>
<dbReference type="FunFam" id="1.10.472.10:FF:000023">
    <property type="entry name" value="Transcription initiation factor IIB"/>
    <property type="match status" value="1"/>
</dbReference>
<dbReference type="FunFam" id="1.10.472.170:FF:000001">
    <property type="entry name" value="Transcription initiation factor IIB"/>
    <property type="match status" value="1"/>
</dbReference>
<dbReference type="Gene3D" id="1.10.472.170">
    <property type="match status" value="1"/>
</dbReference>
<dbReference type="Gene3D" id="1.10.472.10">
    <property type="entry name" value="Cyclin-like"/>
    <property type="match status" value="1"/>
</dbReference>
<dbReference type="HAMAP" id="MF_00383">
    <property type="entry name" value="TF2B_arch"/>
    <property type="match status" value="1"/>
</dbReference>
<dbReference type="InterPro" id="IPR013763">
    <property type="entry name" value="Cyclin-like_dom"/>
</dbReference>
<dbReference type="InterPro" id="IPR036915">
    <property type="entry name" value="Cyclin-like_sf"/>
</dbReference>
<dbReference type="InterPro" id="IPR000812">
    <property type="entry name" value="TFIIB"/>
</dbReference>
<dbReference type="InterPro" id="IPR023484">
    <property type="entry name" value="TFIIB_arc"/>
</dbReference>
<dbReference type="InterPro" id="IPR023486">
    <property type="entry name" value="TFIIB_CS"/>
</dbReference>
<dbReference type="InterPro" id="IPR013150">
    <property type="entry name" value="TFIIB_cyclin"/>
</dbReference>
<dbReference type="InterPro" id="IPR013137">
    <property type="entry name" value="Znf_TFIIB"/>
</dbReference>
<dbReference type="NCBIfam" id="NF001658">
    <property type="entry name" value="PRK00423.1"/>
    <property type="match status" value="1"/>
</dbReference>
<dbReference type="PANTHER" id="PTHR11618:SF13">
    <property type="entry name" value="TRANSCRIPTION INITIATION FACTOR IIB"/>
    <property type="match status" value="1"/>
</dbReference>
<dbReference type="PANTHER" id="PTHR11618">
    <property type="entry name" value="TRANSCRIPTION INITIATION FACTOR IIB-RELATED"/>
    <property type="match status" value="1"/>
</dbReference>
<dbReference type="Pfam" id="PF00382">
    <property type="entry name" value="TFIIB"/>
    <property type="match status" value="2"/>
</dbReference>
<dbReference type="Pfam" id="PF08271">
    <property type="entry name" value="Zn_Ribbon_TF"/>
    <property type="match status" value="1"/>
</dbReference>
<dbReference type="PRINTS" id="PR00685">
    <property type="entry name" value="TIFACTORIIB"/>
</dbReference>
<dbReference type="SMART" id="SM00385">
    <property type="entry name" value="CYCLIN"/>
    <property type="match status" value="2"/>
</dbReference>
<dbReference type="SUPFAM" id="SSF47954">
    <property type="entry name" value="Cyclin-like"/>
    <property type="match status" value="2"/>
</dbReference>
<dbReference type="SUPFAM" id="SSF57783">
    <property type="entry name" value="Zinc beta-ribbon"/>
    <property type="match status" value="1"/>
</dbReference>
<dbReference type="PROSITE" id="PS00782">
    <property type="entry name" value="TFIIB"/>
    <property type="match status" value="2"/>
</dbReference>
<dbReference type="PROSITE" id="PS51134">
    <property type="entry name" value="ZF_TFIIB"/>
    <property type="match status" value="1"/>
</dbReference>